<name>RL10_ACIC1</name>
<reference key="1">
    <citation type="journal article" date="2009" name="Genome Res.">
        <title>Complete genome of the cellulolytic thermophile Acidothermus cellulolyticus 11B provides insights into its ecophysiological and evolutionary adaptations.</title>
        <authorList>
            <person name="Barabote R.D."/>
            <person name="Xie G."/>
            <person name="Leu D.H."/>
            <person name="Normand P."/>
            <person name="Necsulea A."/>
            <person name="Daubin V."/>
            <person name="Medigue C."/>
            <person name="Adney W.S."/>
            <person name="Xu X.C."/>
            <person name="Lapidus A."/>
            <person name="Parales R.E."/>
            <person name="Detter C."/>
            <person name="Pujic P."/>
            <person name="Bruce D."/>
            <person name="Lavire C."/>
            <person name="Challacombe J.F."/>
            <person name="Brettin T.S."/>
            <person name="Berry A.M."/>
        </authorList>
    </citation>
    <scope>NUCLEOTIDE SEQUENCE [LARGE SCALE GENOMIC DNA]</scope>
    <source>
        <strain>ATCC 43068 / DSM 8971 / 11B</strain>
    </source>
</reference>
<protein>
    <recommendedName>
        <fullName evidence="1">Large ribosomal subunit protein uL10</fullName>
    </recommendedName>
    <alternativeName>
        <fullName evidence="2">50S ribosomal protein L10</fullName>
    </alternativeName>
</protein>
<gene>
    <name evidence="1" type="primary">rplJ</name>
    <name type="ordered locus">Acel_0297</name>
</gene>
<keyword id="KW-1185">Reference proteome</keyword>
<keyword id="KW-0687">Ribonucleoprotein</keyword>
<keyword id="KW-0689">Ribosomal protein</keyword>
<keyword id="KW-0694">RNA-binding</keyword>
<keyword id="KW-0699">rRNA-binding</keyword>
<organism>
    <name type="scientific">Acidothermus cellulolyticus (strain ATCC 43068 / DSM 8971 / 11B)</name>
    <dbReference type="NCBI Taxonomy" id="351607"/>
    <lineage>
        <taxon>Bacteria</taxon>
        <taxon>Bacillati</taxon>
        <taxon>Actinomycetota</taxon>
        <taxon>Actinomycetes</taxon>
        <taxon>Acidothermales</taxon>
        <taxon>Acidothermaceae</taxon>
        <taxon>Acidothermus</taxon>
    </lineage>
</organism>
<accession>A0LRL1</accession>
<evidence type="ECO:0000255" key="1">
    <source>
        <dbReference type="HAMAP-Rule" id="MF_00362"/>
    </source>
</evidence>
<evidence type="ECO:0000305" key="2"/>
<proteinExistence type="inferred from homology"/>
<feature type="chain" id="PRO_1000005456" description="Large ribosomal subunit protein uL10">
    <location>
        <begin position="1"/>
        <end position="172"/>
    </location>
</feature>
<comment type="function">
    <text evidence="1">Forms part of the ribosomal stalk, playing a central role in the interaction of the ribosome with GTP-bound translation factors.</text>
</comment>
<comment type="subunit">
    <text evidence="1">Part of the ribosomal stalk of the 50S ribosomal subunit. The N-terminus interacts with L11 and the large rRNA to form the base of the stalk. The C-terminus forms an elongated spine to which L12 dimers bind in a sequential fashion forming a multimeric L10(L12)X complex.</text>
</comment>
<comment type="similarity">
    <text evidence="1">Belongs to the universal ribosomal protein uL10 family.</text>
</comment>
<sequence length="172" mass="18040">MPRPEKVQLVAELTDRFASSTAAVLTEYRGLSVAQLNELRRALNGDAEYTVVKNTLSKLAVRNAGLTELEPLLQGPSAVAFVRGDPVKAAKSLRDFARANNALVIKGGILEGKLLSAAEVAALADLESREVLLAKVAGAANAVLARAAGLFQAPLAQVARLAEALRAKQAES</sequence>
<dbReference type="EMBL" id="CP000481">
    <property type="protein sequence ID" value="ABK52071.1"/>
    <property type="molecule type" value="Genomic_DNA"/>
</dbReference>
<dbReference type="RefSeq" id="WP_011719134.1">
    <property type="nucleotide sequence ID" value="NC_008578.1"/>
</dbReference>
<dbReference type="SMR" id="A0LRL1"/>
<dbReference type="FunCoup" id="A0LRL1">
    <property type="interactions" value="251"/>
</dbReference>
<dbReference type="STRING" id="351607.Acel_0297"/>
<dbReference type="KEGG" id="ace:Acel_0297"/>
<dbReference type="eggNOG" id="COG0244">
    <property type="taxonomic scope" value="Bacteria"/>
</dbReference>
<dbReference type="HOGENOM" id="CLU_092227_1_0_11"/>
<dbReference type="InParanoid" id="A0LRL1"/>
<dbReference type="OrthoDB" id="3186107at2"/>
<dbReference type="Proteomes" id="UP000008221">
    <property type="component" value="Chromosome"/>
</dbReference>
<dbReference type="GO" id="GO:0015934">
    <property type="term" value="C:large ribosomal subunit"/>
    <property type="evidence" value="ECO:0007669"/>
    <property type="project" value="InterPro"/>
</dbReference>
<dbReference type="GO" id="GO:0070180">
    <property type="term" value="F:large ribosomal subunit rRNA binding"/>
    <property type="evidence" value="ECO:0007669"/>
    <property type="project" value="UniProtKB-UniRule"/>
</dbReference>
<dbReference type="GO" id="GO:0003735">
    <property type="term" value="F:structural constituent of ribosome"/>
    <property type="evidence" value="ECO:0007669"/>
    <property type="project" value="InterPro"/>
</dbReference>
<dbReference type="GO" id="GO:0006412">
    <property type="term" value="P:translation"/>
    <property type="evidence" value="ECO:0007669"/>
    <property type="project" value="UniProtKB-UniRule"/>
</dbReference>
<dbReference type="CDD" id="cd05797">
    <property type="entry name" value="Ribosomal_L10"/>
    <property type="match status" value="1"/>
</dbReference>
<dbReference type="Gene3D" id="3.30.70.1730">
    <property type="match status" value="1"/>
</dbReference>
<dbReference type="Gene3D" id="6.10.250.290">
    <property type="match status" value="1"/>
</dbReference>
<dbReference type="HAMAP" id="MF_00362">
    <property type="entry name" value="Ribosomal_uL10"/>
    <property type="match status" value="1"/>
</dbReference>
<dbReference type="InterPro" id="IPR001790">
    <property type="entry name" value="Ribosomal_uL10"/>
</dbReference>
<dbReference type="InterPro" id="IPR043141">
    <property type="entry name" value="Ribosomal_uL10-like_sf"/>
</dbReference>
<dbReference type="InterPro" id="IPR022973">
    <property type="entry name" value="Ribosomal_uL10_bac"/>
</dbReference>
<dbReference type="InterPro" id="IPR047865">
    <property type="entry name" value="Ribosomal_uL10_bac_type"/>
</dbReference>
<dbReference type="InterPro" id="IPR002363">
    <property type="entry name" value="Ribosomal_uL10_CS_bac"/>
</dbReference>
<dbReference type="NCBIfam" id="NF000955">
    <property type="entry name" value="PRK00099.1-1"/>
    <property type="match status" value="1"/>
</dbReference>
<dbReference type="PANTHER" id="PTHR11560">
    <property type="entry name" value="39S RIBOSOMAL PROTEIN L10, MITOCHONDRIAL"/>
    <property type="match status" value="1"/>
</dbReference>
<dbReference type="Pfam" id="PF00466">
    <property type="entry name" value="Ribosomal_L10"/>
    <property type="match status" value="1"/>
</dbReference>
<dbReference type="SUPFAM" id="SSF160369">
    <property type="entry name" value="Ribosomal protein L10-like"/>
    <property type="match status" value="1"/>
</dbReference>
<dbReference type="PROSITE" id="PS01109">
    <property type="entry name" value="RIBOSOMAL_L10"/>
    <property type="match status" value="1"/>
</dbReference>